<sequence>SNTALRRYNQWATGHFM</sequence>
<organism>
    <name type="scientific">Glandirana rugosa</name>
    <name type="common">Japanese wrinkled frog</name>
    <name type="synonym">Rana rugosa</name>
    <dbReference type="NCBI Taxonomy" id="8410"/>
    <lineage>
        <taxon>Eukaryota</taxon>
        <taxon>Metazoa</taxon>
        <taxon>Chordata</taxon>
        <taxon>Craniata</taxon>
        <taxon>Vertebrata</taxon>
        <taxon>Euteleostomi</taxon>
        <taxon>Amphibia</taxon>
        <taxon>Batrachia</taxon>
        <taxon>Anura</taxon>
        <taxon>Neobatrachia</taxon>
        <taxon>Ranoidea</taxon>
        <taxon>Ranidae</taxon>
        <taxon>Glandirana</taxon>
    </lineage>
</organism>
<accession>P08952</accession>
<protein>
    <recommendedName>
        <fullName>Ranatensin-R</fullName>
    </recommendedName>
</protein>
<name>RANR_GLARU</name>
<comment type="subcellular location">
    <subcellularLocation>
        <location>Secreted</location>
    </subcellularLocation>
</comment>
<comment type="tissue specificity">
    <text>Expressed by the skin glands.</text>
</comment>
<comment type="similarity">
    <text evidence="2">Belongs to the bombesin/neuromedin-B/ranatensin family.</text>
</comment>
<dbReference type="GO" id="GO:0005576">
    <property type="term" value="C:extracellular region"/>
    <property type="evidence" value="ECO:0007669"/>
    <property type="project" value="UniProtKB-SubCell"/>
</dbReference>
<dbReference type="GO" id="GO:0006952">
    <property type="term" value="P:defense response"/>
    <property type="evidence" value="ECO:0007669"/>
    <property type="project" value="UniProtKB-KW"/>
</dbReference>
<dbReference type="GO" id="GO:0007218">
    <property type="term" value="P:neuropeptide signaling pathway"/>
    <property type="evidence" value="ECO:0007669"/>
    <property type="project" value="InterPro"/>
</dbReference>
<dbReference type="InterPro" id="IPR000874">
    <property type="entry name" value="Bombesin"/>
</dbReference>
<dbReference type="Pfam" id="PF02044">
    <property type="entry name" value="Bombesin"/>
    <property type="match status" value="1"/>
</dbReference>
<dbReference type="PROSITE" id="PS00257">
    <property type="entry name" value="BOMBESIN"/>
    <property type="match status" value="1"/>
</dbReference>
<reference key="1">
    <citation type="journal article" date="1979" name="Chem. Pharm. Bull.">
        <title>The studies on the active peptide in the skin of Rana rugosa. II. The structure of ranatensin-R, the new ranatensin analogue, and granuliberin-R, the new mast cell degranulating peptide.</title>
        <authorList>
            <person name="Yasuhara T."/>
            <person name="Ishikawa O."/>
            <person name="Nakajima T."/>
        </authorList>
    </citation>
    <scope>PROTEIN SEQUENCE</scope>
    <scope>AMIDATION AT MET-17</scope>
    <source>
        <tissue>Skin secretion</tissue>
    </source>
</reference>
<keyword id="KW-0027">Amidation</keyword>
<keyword id="KW-0878">Amphibian defense peptide</keyword>
<keyword id="KW-0903">Direct protein sequencing</keyword>
<keyword id="KW-0964">Secreted</keyword>
<evidence type="ECO:0000269" key="1">
    <source>
    </source>
</evidence>
<evidence type="ECO:0000305" key="2"/>
<proteinExistence type="evidence at protein level"/>
<feature type="peptide" id="PRO_0000043496" description="Ranatensin-R">
    <location>
        <begin position="1"/>
        <end position="17"/>
    </location>
</feature>
<feature type="modified residue" description="Methionine amide" evidence="1">
    <location>
        <position position="17"/>
    </location>
</feature>